<sequence>MILTFIKIKKYRIKYLIIKKQKAFGRNNLGFITCRAKGGGIKRNLYKILDSNFANYGMSFSSAFYVNIIYDSFRRIFLAVYFIINSIIKNIYRYFLLTKNLKIGSQINFGFKAPLKIGNALPLYKILLGSFIYNIEIRYKGKGSLVKNANHNAIILMIGDIYVTVKLPSGEIKLLLKNLFCILGQLEIRRKVNKNIKKHAGFNRKLSIRPKIRGAAMNAVDHPHGGGEGKASVGFKFARTLWGKAFKGIKTRKKNKHLSRFILQHRL</sequence>
<organism>
    <name type="scientific">Toxoplasma gondii</name>
    <dbReference type="NCBI Taxonomy" id="5811"/>
    <lineage>
        <taxon>Eukaryota</taxon>
        <taxon>Sar</taxon>
        <taxon>Alveolata</taxon>
        <taxon>Apicomplexa</taxon>
        <taxon>Conoidasida</taxon>
        <taxon>Coccidia</taxon>
        <taxon>Eucoccidiorida</taxon>
        <taxon>Eimeriorina</taxon>
        <taxon>Sarcocystidae</taxon>
        <taxon>Toxoplasma</taxon>
    </lineage>
</organism>
<dbReference type="EMBL" id="U87145">
    <property type="protein sequence ID" value="AAD41134.1"/>
    <property type="molecule type" value="Genomic_DNA"/>
</dbReference>
<dbReference type="RefSeq" id="NP_044547.1">
    <property type="nucleotide sequence ID" value="NC_001799.1"/>
</dbReference>
<dbReference type="SMR" id="Q9MTE5"/>
<dbReference type="GeneID" id="1466597"/>
<dbReference type="VEuPathDB" id="ToxoDB:TGARI_300621"/>
<dbReference type="VEuPathDB" id="ToxoDB:TGCAST_300621"/>
<dbReference type="VEuPathDB" id="ToxoDB:TGCOUG_300621"/>
<dbReference type="VEuPathDB" id="ToxoDB:TGDOM2_402360"/>
<dbReference type="VEuPathDB" id="ToxoDB:TGFOU_300621"/>
<dbReference type="VEuPathDB" id="ToxoDB:TGGT1_300621B"/>
<dbReference type="VEuPathDB" id="ToxoDB:TGMAS_300621"/>
<dbReference type="VEuPathDB" id="ToxoDB:TGME49_300621"/>
<dbReference type="VEuPathDB" id="ToxoDB:TGP89_300621"/>
<dbReference type="VEuPathDB" id="ToxoDB:TGPRC2_300621"/>
<dbReference type="VEuPathDB" id="ToxoDB:TGRH88_086290"/>
<dbReference type="VEuPathDB" id="ToxoDB:TGRUB_300621"/>
<dbReference type="VEuPathDB" id="ToxoDB:TGVAND_300621"/>
<dbReference type="VEuPathDB" id="ToxoDB:TGVEG_254400"/>
<dbReference type="GO" id="GO:0020011">
    <property type="term" value="C:apicoplast"/>
    <property type="evidence" value="ECO:0007669"/>
    <property type="project" value="UniProtKB-SubCell"/>
</dbReference>
<dbReference type="GO" id="GO:0005762">
    <property type="term" value="C:mitochondrial large ribosomal subunit"/>
    <property type="evidence" value="ECO:0007669"/>
    <property type="project" value="TreeGrafter"/>
</dbReference>
<dbReference type="GO" id="GO:0003723">
    <property type="term" value="F:RNA binding"/>
    <property type="evidence" value="ECO:0007669"/>
    <property type="project" value="InterPro"/>
</dbReference>
<dbReference type="GO" id="GO:0003735">
    <property type="term" value="F:structural constituent of ribosome"/>
    <property type="evidence" value="ECO:0007669"/>
    <property type="project" value="InterPro"/>
</dbReference>
<dbReference type="GO" id="GO:0016740">
    <property type="term" value="F:transferase activity"/>
    <property type="evidence" value="ECO:0007669"/>
    <property type="project" value="InterPro"/>
</dbReference>
<dbReference type="GO" id="GO:0032543">
    <property type="term" value="P:mitochondrial translation"/>
    <property type="evidence" value="ECO:0007669"/>
    <property type="project" value="TreeGrafter"/>
</dbReference>
<dbReference type="Gene3D" id="2.30.30.30">
    <property type="match status" value="1"/>
</dbReference>
<dbReference type="Gene3D" id="2.40.50.140">
    <property type="entry name" value="Nucleic acid-binding proteins"/>
    <property type="match status" value="1"/>
</dbReference>
<dbReference type="Gene3D" id="4.10.950.10">
    <property type="entry name" value="Ribosomal protein L2, domain 3"/>
    <property type="match status" value="1"/>
</dbReference>
<dbReference type="InterPro" id="IPR012340">
    <property type="entry name" value="NA-bd_OB-fold"/>
</dbReference>
<dbReference type="InterPro" id="IPR014722">
    <property type="entry name" value="Rib_uL2_dom2"/>
</dbReference>
<dbReference type="InterPro" id="IPR002171">
    <property type="entry name" value="Ribosomal_uL2"/>
</dbReference>
<dbReference type="InterPro" id="IPR005880">
    <property type="entry name" value="Ribosomal_uL2_bac/org-type"/>
</dbReference>
<dbReference type="InterPro" id="IPR022669">
    <property type="entry name" value="Ribosomal_uL2_C"/>
</dbReference>
<dbReference type="InterPro" id="IPR022671">
    <property type="entry name" value="Ribosomal_uL2_CS"/>
</dbReference>
<dbReference type="InterPro" id="IPR014726">
    <property type="entry name" value="Ribosomal_uL2_dom3"/>
</dbReference>
<dbReference type="InterPro" id="IPR022666">
    <property type="entry name" value="Ribosomal_uL2_RNA-bd_dom"/>
</dbReference>
<dbReference type="InterPro" id="IPR008991">
    <property type="entry name" value="Translation_prot_SH3-like_sf"/>
</dbReference>
<dbReference type="NCBIfam" id="TIGR01171">
    <property type="entry name" value="rplB_bact"/>
    <property type="match status" value="1"/>
</dbReference>
<dbReference type="PANTHER" id="PTHR13691:SF5">
    <property type="entry name" value="LARGE RIBOSOMAL SUBUNIT PROTEIN UL2M"/>
    <property type="match status" value="1"/>
</dbReference>
<dbReference type="PANTHER" id="PTHR13691">
    <property type="entry name" value="RIBOSOMAL PROTEIN L2"/>
    <property type="match status" value="1"/>
</dbReference>
<dbReference type="Pfam" id="PF00181">
    <property type="entry name" value="Ribosomal_L2"/>
    <property type="match status" value="1"/>
</dbReference>
<dbReference type="Pfam" id="PF03947">
    <property type="entry name" value="Ribosomal_L2_C"/>
    <property type="match status" value="1"/>
</dbReference>
<dbReference type="PIRSF" id="PIRSF002158">
    <property type="entry name" value="Ribosomal_L2"/>
    <property type="match status" value="1"/>
</dbReference>
<dbReference type="SMART" id="SM01382">
    <property type="entry name" value="Ribosomal_L2_C"/>
    <property type="match status" value="1"/>
</dbReference>
<dbReference type="SUPFAM" id="SSF50249">
    <property type="entry name" value="Nucleic acid-binding proteins"/>
    <property type="match status" value="1"/>
</dbReference>
<dbReference type="SUPFAM" id="SSF50104">
    <property type="entry name" value="Translation proteins SH3-like domain"/>
    <property type="match status" value="1"/>
</dbReference>
<dbReference type="PROSITE" id="PS00467">
    <property type="entry name" value="RIBOSOMAL_L2"/>
    <property type="match status" value="1"/>
</dbReference>
<reference key="1">
    <citation type="submission" date="1999-06" db="EMBL/GenBank/DDBJ databases">
        <title>Mapping, cloning, and complete sequence annotation of the 35-kb plastid genome of Toxoplasma gondii.</title>
        <authorList>
            <person name="Kissinger J.C."/>
            <person name="Donald R.G."/>
            <person name="Moulton A.L."/>
            <person name="Gutell R."/>
            <person name="Aiello D.P."/>
            <person name="Lang-Unnasch N."/>
            <person name="Roos D.S."/>
        </authorList>
    </citation>
    <scope>NUCLEOTIDE SEQUENCE [GENOMIC DNA]</scope>
    <source>
        <strain>RH</strain>
    </source>
</reference>
<protein>
    <recommendedName>
        <fullName evidence="2">Large ribosomal subunit protein uL2c</fullName>
    </recommendedName>
    <alternativeName>
        <fullName evidence="3">50S ribosomal protein L2, apicoplast</fullName>
    </alternativeName>
</protein>
<gene>
    <name type="primary">rpl2</name>
</gene>
<proteinExistence type="inferred from homology"/>
<comment type="subunit">
    <text evidence="1">Part of the 50S ribosomal subunit.</text>
</comment>
<comment type="subcellular location">
    <subcellularLocation>
        <location>Plastid</location>
        <location>Apicoplast</location>
    </subcellularLocation>
</comment>
<comment type="similarity">
    <text evidence="3">Belongs to the universal ribosomal protein uL2 family.</text>
</comment>
<keyword id="KW-0933">Apicoplast</keyword>
<keyword id="KW-0934">Plastid</keyword>
<keyword id="KW-0687">Ribonucleoprotein</keyword>
<keyword id="KW-0689">Ribosomal protein</keyword>
<evidence type="ECO:0000250" key="1"/>
<evidence type="ECO:0000255" key="2">
    <source>
        <dbReference type="HAMAP-Rule" id="MF_01320"/>
    </source>
</evidence>
<evidence type="ECO:0000305" key="3"/>
<geneLocation type="apicoplast"/>
<name>RK2_TOXGO</name>
<feature type="chain" id="PRO_0000310090" description="Large ribosomal subunit protein uL2c">
    <location>
        <begin position="1"/>
        <end position="267"/>
    </location>
</feature>
<accession>Q9MTE5</accession>